<reference key="1">
    <citation type="journal article" date="2005" name="Genome Res.">
        <title>Comparative and functional genomic analyses of the pathogenicity of phytopathogen Xanthomonas campestris pv. campestris.</title>
        <authorList>
            <person name="Qian W."/>
            <person name="Jia Y."/>
            <person name="Ren S.-X."/>
            <person name="He Y.-Q."/>
            <person name="Feng J.-X."/>
            <person name="Lu L.-F."/>
            <person name="Sun Q."/>
            <person name="Ying G."/>
            <person name="Tang D.-J."/>
            <person name="Tang H."/>
            <person name="Wu W."/>
            <person name="Hao P."/>
            <person name="Wang L."/>
            <person name="Jiang B.-L."/>
            <person name="Zeng S."/>
            <person name="Gu W.-Y."/>
            <person name="Lu G."/>
            <person name="Rong L."/>
            <person name="Tian Y."/>
            <person name="Yao Z."/>
            <person name="Fu G."/>
            <person name="Chen B."/>
            <person name="Fang R."/>
            <person name="Qiang B."/>
            <person name="Chen Z."/>
            <person name="Zhao G.-P."/>
            <person name="Tang J.-L."/>
            <person name="He C."/>
        </authorList>
    </citation>
    <scope>NUCLEOTIDE SEQUENCE [LARGE SCALE GENOMIC DNA]</scope>
    <source>
        <strain>8004</strain>
    </source>
</reference>
<proteinExistence type="inferred from homology"/>
<feature type="chain" id="PRO_0000244187" description="Ribosome maturation factor RimM">
    <location>
        <begin position="1"/>
        <end position="170"/>
    </location>
</feature>
<feature type="domain" description="PRC barrel" evidence="1">
    <location>
        <begin position="98"/>
        <end position="170"/>
    </location>
</feature>
<sequence length="170" mass="19161">MKPTERRILLGRIVGAFGVKGELKLESWTEPRSAIFRYQPWIVRTPSGQESVLSGVRGRDQGKNLIAVFPDITDRDTVEAMHGTEIYVARSALPPPKPDEYYWVDLEGLQVETVEGVKLGTVSHLFSTGSNDVVVVRGDRERMIPFVLPEYVKSVDFEANLIVVDWDPDF</sequence>
<protein>
    <recommendedName>
        <fullName evidence="1">Ribosome maturation factor RimM</fullName>
    </recommendedName>
</protein>
<accession>Q4US83</accession>
<keyword id="KW-0143">Chaperone</keyword>
<keyword id="KW-0963">Cytoplasm</keyword>
<keyword id="KW-0690">Ribosome biogenesis</keyword>
<keyword id="KW-0698">rRNA processing</keyword>
<comment type="function">
    <text evidence="1">An accessory protein needed during the final step in the assembly of 30S ribosomal subunit, possibly for assembly of the head region. Essential for efficient processing of 16S rRNA. May be needed both before and after RbfA during the maturation of 16S rRNA. It has affinity for free ribosomal 30S subunits but not for 70S ribosomes.</text>
</comment>
<comment type="subunit">
    <text evidence="1">Binds ribosomal protein uS19.</text>
</comment>
<comment type="subcellular location">
    <subcellularLocation>
        <location evidence="1">Cytoplasm</location>
    </subcellularLocation>
</comment>
<comment type="domain">
    <text evidence="1">The PRC barrel domain binds ribosomal protein uS19.</text>
</comment>
<comment type="similarity">
    <text evidence="1">Belongs to the RimM family.</text>
</comment>
<name>RIMM_XANC8</name>
<organism>
    <name type="scientific">Xanthomonas campestris pv. campestris (strain 8004)</name>
    <dbReference type="NCBI Taxonomy" id="314565"/>
    <lineage>
        <taxon>Bacteria</taxon>
        <taxon>Pseudomonadati</taxon>
        <taxon>Pseudomonadota</taxon>
        <taxon>Gammaproteobacteria</taxon>
        <taxon>Lysobacterales</taxon>
        <taxon>Lysobacteraceae</taxon>
        <taxon>Xanthomonas</taxon>
    </lineage>
</organism>
<evidence type="ECO:0000255" key="1">
    <source>
        <dbReference type="HAMAP-Rule" id="MF_00014"/>
    </source>
</evidence>
<gene>
    <name evidence="1" type="primary">rimM</name>
    <name type="ordered locus">XC_3042</name>
</gene>
<dbReference type="EMBL" id="CP000050">
    <property type="protein sequence ID" value="AAY50090.1"/>
    <property type="molecule type" value="Genomic_DNA"/>
</dbReference>
<dbReference type="RefSeq" id="WP_011036397.1">
    <property type="nucleotide sequence ID" value="NZ_CP155948.1"/>
</dbReference>
<dbReference type="SMR" id="Q4US83"/>
<dbReference type="DNASU" id="1001622"/>
<dbReference type="KEGG" id="xcb:XC_3042"/>
<dbReference type="HOGENOM" id="CLU_077636_1_0_6"/>
<dbReference type="Proteomes" id="UP000000420">
    <property type="component" value="Chromosome"/>
</dbReference>
<dbReference type="GO" id="GO:0005737">
    <property type="term" value="C:cytoplasm"/>
    <property type="evidence" value="ECO:0007669"/>
    <property type="project" value="UniProtKB-SubCell"/>
</dbReference>
<dbReference type="GO" id="GO:0005840">
    <property type="term" value="C:ribosome"/>
    <property type="evidence" value="ECO:0007669"/>
    <property type="project" value="InterPro"/>
</dbReference>
<dbReference type="GO" id="GO:0043022">
    <property type="term" value="F:ribosome binding"/>
    <property type="evidence" value="ECO:0007669"/>
    <property type="project" value="InterPro"/>
</dbReference>
<dbReference type="GO" id="GO:0042274">
    <property type="term" value="P:ribosomal small subunit biogenesis"/>
    <property type="evidence" value="ECO:0007669"/>
    <property type="project" value="UniProtKB-UniRule"/>
</dbReference>
<dbReference type="GO" id="GO:0006364">
    <property type="term" value="P:rRNA processing"/>
    <property type="evidence" value="ECO:0007669"/>
    <property type="project" value="UniProtKB-UniRule"/>
</dbReference>
<dbReference type="Gene3D" id="2.30.30.240">
    <property type="entry name" value="PRC-barrel domain"/>
    <property type="match status" value="1"/>
</dbReference>
<dbReference type="Gene3D" id="2.40.30.60">
    <property type="entry name" value="RimM"/>
    <property type="match status" value="1"/>
</dbReference>
<dbReference type="HAMAP" id="MF_00014">
    <property type="entry name" value="Ribosome_mat_RimM"/>
    <property type="match status" value="1"/>
</dbReference>
<dbReference type="InterPro" id="IPR011033">
    <property type="entry name" value="PRC_barrel-like_sf"/>
</dbReference>
<dbReference type="InterPro" id="IPR056792">
    <property type="entry name" value="PRC_RimM"/>
</dbReference>
<dbReference type="InterPro" id="IPR011961">
    <property type="entry name" value="RimM"/>
</dbReference>
<dbReference type="InterPro" id="IPR002676">
    <property type="entry name" value="RimM_N"/>
</dbReference>
<dbReference type="InterPro" id="IPR036976">
    <property type="entry name" value="RimM_N_sf"/>
</dbReference>
<dbReference type="InterPro" id="IPR009000">
    <property type="entry name" value="Transl_B-barrel_sf"/>
</dbReference>
<dbReference type="NCBIfam" id="TIGR02273">
    <property type="entry name" value="16S_RimM"/>
    <property type="match status" value="1"/>
</dbReference>
<dbReference type="PANTHER" id="PTHR33692">
    <property type="entry name" value="RIBOSOME MATURATION FACTOR RIMM"/>
    <property type="match status" value="1"/>
</dbReference>
<dbReference type="PANTHER" id="PTHR33692:SF1">
    <property type="entry name" value="RIBOSOME MATURATION FACTOR RIMM"/>
    <property type="match status" value="1"/>
</dbReference>
<dbReference type="Pfam" id="PF24986">
    <property type="entry name" value="PRC_RimM"/>
    <property type="match status" value="1"/>
</dbReference>
<dbReference type="Pfam" id="PF01782">
    <property type="entry name" value="RimM"/>
    <property type="match status" value="1"/>
</dbReference>
<dbReference type="SUPFAM" id="SSF50346">
    <property type="entry name" value="PRC-barrel domain"/>
    <property type="match status" value="1"/>
</dbReference>
<dbReference type="SUPFAM" id="SSF50447">
    <property type="entry name" value="Translation proteins"/>
    <property type="match status" value="1"/>
</dbReference>